<accession>A5V5Z1</accession>
<gene>
    <name evidence="1" type="primary">rplX</name>
    <name type="ordered locus">Swit_1342</name>
</gene>
<proteinExistence type="inferred from homology"/>
<dbReference type="EMBL" id="CP000699">
    <property type="protein sequence ID" value="ABQ67707.1"/>
    <property type="molecule type" value="Genomic_DNA"/>
</dbReference>
<dbReference type="SMR" id="A5V5Z1"/>
<dbReference type="STRING" id="392499.Swit_1342"/>
<dbReference type="PaxDb" id="392499-Swit_1342"/>
<dbReference type="KEGG" id="swi:Swit_1342"/>
<dbReference type="eggNOG" id="COG0198">
    <property type="taxonomic scope" value="Bacteria"/>
</dbReference>
<dbReference type="HOGENOM" id="CLU_093315_2_2_5"/>
<dbReference type="OrthoDB" id="9807419at2"/>
<dbReference type="Proteomes" id="UP000001989">
    <property type="component" value="Chromosome"/>
</dbReference>
<dbReference type="GO" id="GO:1990904">
    <property type="term" value="C:ribonucleoprotein complex"/>
    <property type="evidence" value="ECO:0007669"/>
    <property type="project" value="UniProtKB-KW"/>
</dbReference>
<dbReference type="GO" id="GO:0005840">
    <property type="term" value="C:ribosome"/>
    <property type="evidence" value="ECO:0007669"/>
    <property type="project" value="UniProtKB-KW"/>
</dbReference>
<dbReference type="GO" id="GO:0019843">
    <property type="term" value="F:rRNA binding"/>
    <property type="evidence" value="ECO:0007669"/>
    <property type="project" value="UniProtKB-UniRule"/>
</dbReference>
<dbReference type="GO" id="GO:0003735">
    <property type="term" value="F:structural constituent of ribosome"/>
    <property type="evidence" value="ECO:0007669"/>
    <property type="project" value="InterPro"/>
</dbReference>
<dbReference type="GO" id="GO:0006412">
    <property type="term" value="P:translation"/>
    <property type="evidence" value="ECO:0007669"/>
    <property type="project" value="UniProtKB-UniRule"/>
</dbReference>
<dbReference type="CDD" id="cd06089">
    <property type="entry name" value="KOW_RPL26"/>
    <property type="match status" value="1"/>
</dbReference>
<dbReference type="Gene3D" id="2.30.30.30">
    <property type="match status" value="1"/>
</dbReference>
<dbReference type="HAMAP" id="MF_01326_B">
    <property type="entry name" value="Ribosomal_uL24_B"/>
    <property type="match status" value="1"/>
</dbReference>
<dbReference type="InterPro" id="IPR005824">
    <property type="entry name" value="KOW"/>
</dbReference>
<dbReference type="InterPro" id="IPR014722">
    <property type="entry name" value="Rib_uL2_dom2"/>
</dbReference>
<dbReference type="InterPro" id="IPR003256">
    <property type="entry name" value="Ribosomal_uL24"/>
</dbReference>
<dbReference type="InterPro" id="IPR005825">
    <property type="entry name" value="Ribosomal_uL24_CS"/>
</dbReference>
<dbReference type="InterPro" id="IPR041988">
    <property type="entry name" value="Ribosomal_uL24_KOW"/>
</dbReference>
<dbReference type="InterPro" id="IPR008991">
    <property type="entry name" value="Translation_prot_SH3-like_sf"/>
</dbReference>
<dbReference type="NCBIfam" id="TIGR01079">
    <property type="entry name" value="rplX_bact"/>
    <property type="match status" value="1"/>
</dbReference>
<dbReference type="PANTHER" id="PTHR12903">
    <property type="entry name" value="MITOCHONDRIAL RIBOSOMAL PROTEIN L24"/>
    <property type="match status" value="1"/>
</dbReference>
<dbReference type="Pfam" id="PF00467">
    <property type="entry name" value="KOW"/>
    <property type="match status" value="1"/>
</dbReference>
<dbReference type="Pfam" id="PF17136">
    <property type="entry name" value="ribosomal_L24"/>
    <property type="match status" value="1"/>
</dbReference>
<dbReference type="SMART" id="SM00739">
    <property type="entry name" value="KOW"/>
    <property type="match status" value="1"/>
</dbReference>
<dbReference type="SUPFAM" id="SSF50104">
    <property type="entry name" value="Translation proteins SH3-like domain"/>
    <property type="match status" value="1"/>
</dbReference>
<dbReference type="PROSITE" id="PS01108">
    <property type="entry name" value="RIBOSOMAL_L24"/>
    <property type="match status" value="1"/>
</dbReference>
<comment type="function">
    <text evidence="1">One of two assembly initiator proteins, it binds directly to the 5'-end of the 23S rRNA, where it nucleates assembly of the 50S subunit.</text>
</comment>
<comment type="function">
    <text evidence="1">One of the proteins that surrounds the polypeptide exit tunnel on the outside of the subunit.</text>
</comment>
<comment type="subunit">
    <text evidence="1">Part of the 50S ribosomal subunit.</text>
</comment>
<comment type="similarity">
    <text evidence="1">Belongs to the universal ribosomal protein uL24 family.</text>
</comment>
<name>RL24_RHIWR</name>
<feature type="chain" id="PRO_1000052316" description="Large ribosomal subunit protein uL24">
    <location>
        <begin position="1"/>
        <end position="105"/>
    </location>
</feature>
<reference key="1">
    <citation type="journal article" date="2010" name="J. Bacteriol.">
        <title>Genome sequence of the dioxin-mineralizing bacterium Sphingomonas wittichii RW1.</title>
        <authorList>
            <person name="Miller T.R."/>
            <person name="Delcher A.L."/>
            <person name="Salzberg S.L."/>
            <person name="Saunders E."/>
            <person name="Detter J.C."/>
            <person name="Halden R.U."/>
        </authorList>
    </citation>
    <scope>NUCLEOTIDE SEQUENCE [LARGE SCALE GENOMIC DNA]</scope>
    <source>
        <strain>DSM 6014 / CCUG 31198 / JCM 15750 / NBRC 105917 / EY 4224 / RW1</strain>
    </source>
</reference>
<protein>
    <recommendedName>
        <fullName evidence="1">Large ribosomal subunit protein uL24</fullName>
    </recommendedName>
    <alternativeName>
        <fullName evidence="2">50S ribosomal protein L24</fullName>
    </alternativeName>
</protein>
<keyword id="KW-1185">Reference proteome</keyword>
<keyword id="KW-0687">Ribonucleoprotein</keyword>
<keyword id="KW-0689">Ribosomal protein</keyword>
<keyword id="KW-0694">RNA-binding</keyword>
<keyword id="KW-0699">rRNA-binding</keyword>
<sequence>MSALKIKKGDRVVVLSGKDKGKTGEVTKSFPKDAKVIVSGVNVATRHRKPSQANPQGGLERVEAPLHVSKVAIATADGKPTRVRFEVKDGKKVRVAVKTGETING</sequence>
<organism>
    <name type="scientific">Rhizorhabdus wittichii (strain DSM 6014 / CCUG 31198 / JCM 15750 / NBRC 105917 / EY 4224 / RW1)</name>
    <name type="common">Sphingomonas wittichii</name>
    <dbReference type="NCBI Taxonomy" id="392499"/>
    <lineage>
        <taxon>Bacteria</taxon>
        <taxon>Pseudomonadati</taxon>
        <taxon>Pseudomonadota</taxon>
        <taxon>Alphaproteobacteria</taxon>
        <taxon>Sphingomonadales</taxon>
        <taxon>Sphingomonadaceae</taxon>
        <taxon>Rhizorhabdus</taxon>
    </lineage>
</organism>
<evidence type="ECO:0000255" key="1">
    <source>
        <dbReference type="HAMAP-Rule" id="MF_01326"/>
    </source>
</evidence>
<evidence type="ECO:0000305" key="2"/>